<name>FABZ_BURMA</name>
<feature type="chain" id="PRO_0000091655" description="3-hydroxyacyl-[acyl-carrier-protein] dehydratase FabZ">
    <location>
        <begin position="1"/>
        <end position="155"/>
    </location>
</feature>
<feature type="active site" evidence="1">
    <location>
        <position position="54"/>
    </location>
</feature>
<organism>
    <name type="scientific">Burkholderia mallei (strain ATCC 23344)</name>
    <dbReference type="NCBI Taxonomy" id="243160"/>
    <lineage>
        <taxon>Bacteria</taxon>
        <taxon>Pseudomonadati</taxon>
        <taxon>Pseudomonadota</taxon>
        <taxon>Betaproteobacteria</taxon>
        <taxon>Burkholderiales</taxon>
        <taxon>Burkholderiaceae</taxon>
        <taxon>Burkholderia</taxon>
        <taxon>pseudomallei group</taxon>
    </lineage>
</organism>
<accession>Q62JD5</accession>
<proteinExistence type="inferred from homology"/>
<gene>
    <name evidence="1" type="primary">fabZ</name>
    <name type="ordered locus">BMA1544</name>
</gene>
<keyword id="KW-0963">Cytoplasm</keyword>
<keyword id="KW-0441">Lipid A biosynthesis</keyword>
<keyword id="KW-0444">Lipid biosynthesis</keyword>
<keyword id="KW-0443">Lipid metabolism</keyword>
<keyword id="KW-0456">Lyase</keyword>
<keyword id="KW-1185">Reference proteome</keyword>
<comment type="function">
    <text evidence="1">Involved in unsaturated fatty acids biosynthesis. Catalyzes the dehydration of short chain beta-hydroxyacyl-ACPs and long chain saturated and unsaturated beta-hydroxyacyl-ACPs.</text>
</comment>
<comment type="catalytic activity">
    <reaction evidence="1">
        <text>a (3R)-hydroxyacyl-[ACP] = a (2E)-enoyl-[ACP] + H2O</text>
        <dbReference type="Rhea" id="RHEA:13097"/>
        <dbReference type="Rhea" id="RHEA-COMP:9925"/>
        <dbReference type="Rhea" id="RHEA-COMP:9945"/>
        <dbReference type="ChEBI" id="CHEBI:15377"/>
        <dbReference type="ChEBI" id="CHEBI:78784"/>
        <dbReference type="ChEBI" id="CHEBI:78827"/>
        <dbReference type="EC" id="4.2.1.59"/>
    </reaction>
</comment>
<comment type="subcellular location">
    <subcellularLocation>
        <location evidence="1">Cytoplasm</location>
    </subcellularLocation>
</comment>
<comment type="similarity">
    <text evidence="1">Belongs to the thioester dehydratase family. FabZ subfamily.</text>
</comment>
<dbReference type="EC" id="4.2.1.59" evidence="1"/>
<dbReference type="EMBL" id="CP000010">
    <property type="protein sequence ID" value="AAU47744.1"/>
    <property type="molecule type" value="Genomic_DNA"/>
</dbReference>
<dbReference type="RefSeq" id="WP_004192266.1">
    <property type="nucleotide sequence ID" value="NC_006348.1"/>
</dbReference>
<dbReference type="RefSeq" id="YP_103184.1">
    <property type="nucleotide sequence ID" value="NC_006348.1"/>
</dbReference>
<dbReference type="SMR" id="Q62JD5"/>
<dbReference type="GeneID" id="93060689"/>
<dbReference type="KEGG" id="bma:BMA1544"/>
<dbReference type="PATRIC" id="fig|243160.12.peg.1588"/>
<dbReference type="eggNOG" id="COG0764">
    <property type="taxonomic scope" value="Bacteria"/>
</dbReference>
<dbReference type="HOGENOM" id="CLU_078912_1_0_4"/>
<dbReference type="Proteomes" id="UP000006693">
    <property type="component" value="Chromosome 1"/>
</dbReference>
<dbReference type="GO" id="GO:0005737">
    <property type="term" value="C:cytoplasm"/>
    <property type="evidence" value="ECO:0007669"/>
    <property type="project" value="UniProtKB-SubCell"/>
</dbReference>
<dbReference type="GO" id="GO:0016020">
    <property type="term" value="C:membrane"/>
    <property type="evidence" value="ECO:0007669"/>
    <property type="project" value="GOC"/>
</dbReference>
<dbReference type="GO" id="GO:0019171">
    <property type="term" value="F:(3R)-hydroxyacyl-[acyl-carrier-protein] dehydratase activity"/>
    <property type="evidence" value="ECO:0007669"/>
    <property type="project" value="UniProtKB-EC"/>
</dbReference>
<dbReference type="GO" id="GO:0006633">
    <property type="term" value="P:fatty acid biosynthetic process"/>
    <property type="evidence" value="ECO:0007669"/>
    <property type="project" value="UniProtKB-UniRule"/>
</dbReference>
<dbReference type="GO" id="GO:0009245">
    <property type="term" value="P:lipid A biosynthetic process"/>
    <property type="evidence" value="ECO:0007669"/>
    <property type="project" value="UniProtKB-UniRule"/>
</dbReference>
<dbReference type="CDD" id="cd01288">
    <property type="entry name" value="FabZ"/>
    <property type="match status" value="1"/>
</dbReference>
<dbReference type="FunFam" id="3.10.129.10:FF:000001">
    <property type="entry name" value="3-hydroxyacyl-[acyl-carrier-protein] dehydratase FabZ"/>
    <property type="match status" value="1"/>
</dbReference>
<dbReference type="Gene3D" id="3.10.129.10">
    <property type="entry name" value="Hotdog Thioesterase"/>
    <property type="match status" value="1"/>
</dbReference>
<dbReference type="HAMAP" id="MF_00406">
    <property type="entry name" value="FabZ"/>
    <property type="match status" value="1"/>
</dbReference>
<dbReference type="InterPro" id="IPR013114">
    <property type="entry name" value="FabA_FabZ"/>
</dbReference>
<dbReference type="InterPro" id="IPR010084">
    <property type="entry name" value="FabZ"/>
</dbReference>
<dbReference type="InterPro" id="IPR029069">
    <property type="entry name" value="HotDog_dom_sf"/>
</dbReference>
<dbReference type="NCBIfam" id="TIGR01750">
    <property type="entry name" value="fabZ"/>
    <property type="match status" value="1"/>
</dbReference>
<dbReference type="NCBIfam" id="NF000582">
    <property type="entry name" value="PRK00006.1"/>
    <property type="match status" value="1"/>
</dbReference>
<dbReference type="PANTHER" id="PTHR30272">
    <property type="entry name" value="3-HYDROXYACYL-[ACYL-CARRIER-PROTEIN] DEHYDRATASE"/>
    <property type="match status" value="1"/>
</dbReference>
<dbReference type="PANTHER" id="PTHR30272:SF1">
    <property type="entry name" value="3-HYDROXYACYL-[ACYL-CARRIER-PROTEIN] DEHYDRATASE"/>
    <property type="match status" value="1"/>
</dbReference>
<dbReference type="Pfam" id="PF07977">
    <property type="entry name" value="FabA"/>
    <property type="match status" value="1"/>
</dbReference>
<dbReference type="SUPFAM" id="SSF54637">
    <property type="entry name" value="Thioesterase/thiol ester dehydrase-isomerase"/>
    <property type="match status" value="1"/>
</dbReference>
<sequence>MSTEKINFDIHKILTLLPHRYPILLVDRVLELEPHKAIKALKNVTVNEPFFTGHFPKRPVMPGVLIIEALAQAAALLTFAEAQPKDPENTLYYFVGIDNARFKRVVEPGDQLILNVTFERYIRGIWKFKAVAEVDGKVAAEAELMCTVKTADAAP</sequence>
<reference key="1">
    <citation type="journal article" date="2004" name="Proc. Natl. Acad. Sci. U.S.A.">
        <title>Structural flexibility in the Burkholderia mallei genome.</title>
        <authorList>
            <person name="Nierman W.C."/>
            <person name="DeShazer D."/>
            <person name="Kim H.S."/>
            <person name="Tettelin H."/>
            <person name="Nelson K.E."/>
            <person name="Feldblyum T.V."/>
            <person name="Ulrich R.L."/>
            <person name="Ronning C.M."/>
            <person name="Brinkac L.M."/>
            <person name="Daugherty S.C."/>
            <person name="Davidsen T.D."/>
            <person name="DeBoy R.T."/>
            <person name="Dimitrov G."/>
            <person name="Dodson R.J."/>
            <person name="Durkin A.S."/>
            <person name="Gwinn M.L."/>
            <person name="Haft D.H."/>
            <person name="Khouri H.M."/>
            <person name="Kolonay J.F."/>
            <person name="Madupu R."/>
            <person name="Mohammoud Y."/>
            <person name="Nelson W.C."/>
            <person name="Radune D."/>
            <person name="Romero C.M."/>
            <person name="Sarria S."/>
            <person name="Selengut J."/>
            <person name="Shamblin C."/>
            <person name="Sullivan S.A."/>
            <person name="White O."/>
            <person name="Yu Y."/>
            <person name="Zafar N."/>
            <person name="Zhou L."/>
            <person name="Fraser C.M."/>
        </authorList>
    </citation>
    <scope>NUCLEOTIDE SEQUENCE [LARGE SCALE GENOMIC DNA]</scope>
    <source>
        <strain>ATCC 23344</strain>
    </source>
</reference>
<protein>
    <recommendedName>
        <fullName evidence="1">3-hydroxyacyl-[acyl-carrier-protein] dehydratase FabZ</fullName>
        <ecNumber evidence="1">4.2.1.59</ecNumber>
    </recommendedName>
    <alternativeName>
        <fullName evidence="1">(3R)-hydroxymyristoyl-[acyl-carrier-protein] dehydratase</fullName>
        <shortName evidence="1">(3R)-hydroxymyristoyl-ACP dehydrase</shortName>
    </alternativeName>
    <alternativeName>
        <fullName evidence="1">Beta-hydroxyacyl-ACP dehydratase</fullName>
    </alternativeName>
</protein>
<evidence type="ECO:0000255" key="1">
    <source>
        <dbReference type="HAMAP-Rule" id="MF_00406"/>
    </source>
</evidence>